<gene>
    <name type="primary">GPI18</name>
    <name type="ordered locus">CNBC2320</name>
</gene>
<evidence type="ECO:0000250" key="1"/>
<evidence type="ECO:0000255" key="2"/>
<evidence type="ECO:0000305" key="3"/>
<dbReference type="EC" id="2.4.1.-"/>
<dbReference type="EMBL" id="AAEY01000013">
    <property type="protein sequence ID" value="EAL22094.1"/>
    <property type="molecule type" value="Genomic_DNA"/>
</dbReference>
<dbReference type="RefSeq" id="XP_776741.1">
    <property type="nucleotide sequence ID" value="XM_771648.1"/>
</dbReference>
<dbReference type="CAZy" id="GT76">
    <property type="family name" value="Glycosyltransferase Family 76"/>
</dbReference>
<dbReference type="GeneID" id="4934897"/>
<dbReference type="KEGG" id="cnb:CNBC2320"/>
<dbReference type="VEuPathDB" id="FungiDB:CNBC2320"/>
<dbReference type="HOGENOM" id="CLU_029048_1_0_1"/>
<dbReference type="OrthoDB" id="1752at5206"/>
<dbReference type="UniPathway" id="UPA00196"/>
<dbReference type="GO" id="GO:0005789">
    <property type="term" value="C:endoplasmic reticulum membrane"/>
    <property type="evidence" value="ECO:0007669"/>
    <property type="project" value="UniProtKB-SubCell"/>
</dbReference>
<dbReference type="GO" id="GO:0031501">
    <property type="term" value="C:mannosyltransferase complex"/>
    <property type="evidence" value="ECO:0007669"/>
    <property type="project" value="TreeGrafter"/>
</dbReference>
<dbReference type="GO" id="GO:0000009">
    <property type="term" value="F:alpha-1,6-mannosyltransferase activity"/>
    <property type="evidence" value="ECO:0007669"/>
    <property type="project" value="InterPro"/>
</dbReference>
<dbReference type="GO" id="GO:0004376">
    <property type="term" value="F:glycolipid mannosyltransferase activity"/>
    <property type="evidence" value="ECO:0007669"/>
    <property type="project" value="InterPro"/>
</dbReference>
<dbReference type="GO" id="GO:0006506">
    <property type="term" value="P:GPI anchor biosynthetic process"/>
    <property type="evidence" value="ECO:0007669"/>
    <property type="project" value="UniProtKB-UniPathway"/>
</dbReference>
<dbReference type="InterPro" id="IPR007315">
    <property type="entry name" value="PIG-V/Gpi18"/>
</dbReference>
<dbReference type="PANTHER" id="PTHR12468">
    <property type="entry name" value="GPI MANNOSYLTRANSFERASE 2"/>
    <property type="match status" value="1"/>
</dbReference>
<dbReference type="PANTHER" id="PTHR12468:SF2">
    <property type="entry name" value="GPI MANNOSYLTRANSFERASE 2"/>
    <property type="match status" value="1"/>
</dbReference>
<dbReference type="Pfam" id="PF04188">
    <property type="entry name" value="Mannosyl_trans2"/>
    <property type="match status" value="1"/>
</dbReference>
<comment type="function">
    <text evidence="1">Mannosyltransferase involved in glycosylphosphatidylinositol-anchor biosynthesis. Transfers the second mannose to the glycosylphosphatidylinositol during GPI precursor assembly (By similarity).</text>
</comment>
<comment type="pathway">
    <text>Glycolipid biosynthesis; glycosylphosphatidylinositol-anchor biosynthesis.</text>
</comment>
<comment type="subcellular location">
    <subcellularLocation>
        <location evidence="1">Endoplasmic reticulum membrane</location>
        <topology evidence="1">Multi-pass membrane protein</topology>
    </subcellularLocation>
</comment>
<comment type="similarity">
    <text evidence="3">Belongs to the PIGV family.</text>
</comment>
<name>GPI18_CRYNB</name>
<accession>P0CP63</accession>
<accession>Q55WA5</accession>
<accession>Q5KJZ2</accession>
<proteinExistence type="inferred from homology"/>
<reference key="1">
    <citation type="journal article" date="2005" name="Science">
        <title>The genome of the basidiomycetous yeast and human pathogen Cryptococcus neoformans.</title>
        <authorList>
            <person name="Loftus B.J."/>
            <person name="Fung E."/>
            <person name="Roncaglia P."/>
            <person name="Rowley D."/>
            <person name="Amedeo P."/>
            <person name="Bruno D."/>
            <person name="Vamathevan J."/>
            <person name="Miranda M."/>
            <person name="Anderson I.J."/>
            <person name="Fraser J.A."/>
            <person name="Allen J.E."/>
            <person name="Bosdet I.E."/>
            <person name="Brent M.R."/>
            <person name="Chiu R."/>
            <person name="Doering T.L."/>
            <person name="Donlin M.J."/>
            <person name="D'Souza C.A."/>
            <person name="Fox D.S."/>
            <person name="Grinberg V."/>
            <person name="Fu J."/>
            <person name="Fukushima M."/>
            <person name="Haas B.J."/>
            <person name="Huang J.C."/>
            <person name="Janbon G."/>
            <person name="Jones S.J.M."/>
            <person name="Koo H.L."/>
            <person name="Krzywinski M.I."/>
            <person name="Kwon-Chung K.J."/>
            <person name="Lengeler K.B."/>
            <person name="Maiti R."/>
            <person name="Marra M.A."/>
            <person name="Marra R.E."/>
            <person name="Mathewson C.A."/>
            <person name="Mitchell T.G."/>
            <person name="Pertea M."/>
            <person name="Riggs F.R."/>
            <person name="Salzberg S.L."/>
            <person name="Schein J.E."/>
            <person name="Shvartsbeyn A."/>
            <person name="Shin H."/>
            <person name="Shumway M."/>
            <person name="Specht C.A."/>
            <person name="Suh B.B."/>
            <person name="Tenney A."/>
            <person name="Utterback T.R."/>
            <person name="Wickes B.L."/>
            <person name="Wortman J.R."/>
            <person name="Wye N.H."/>
            <person name="Kronstad J.W."/>
            <person name="Lodge J.K."/>
            <person name="Heitman J."/>
            <person name="Davis R.W."/>
            <person name="Fraser C.M."/>
            <person name="Hyman R.W."/>
        </authorList>
    </citation>
    <scope>NUCLEOTIDE SEQUENCE [LARGE SCALE GENOMIC DNA]</scope>
    <source>
        <strain>B-3501A</strain>
    </source>
</reference>
<feature type="chain" id="PRO_0000410189" description="GPI mannosyltransferase 2">
    <location>
        <begin position="1"/>
        <end position="423"/>
    </location>
</feature>
<feature type="transmembrane region" description="Helical" evidence="2">
    <location>
        <begin position="7"/>
        <end position="27"/>
    </location>
</feature>
<feature type="transmembrane region" description="Helical" evidence="2">
    <location>
        <begin position="102"/>
        <end position="122"/>
    </location>
</feature>
<feature type="transmembrane region" description="Helical" evidence="2">
    <location>
        <begin position="128"/>
        <end position="148"/>
    </location>
</feature>
<feature type="transmembrane region" description="Helical" evidence="2">
    <location>
        <begin position="151"/>
        <end position="171"/>
    </location>
</feature>
<feature type="transmembrane region" description="Helical" evidence="2">
    <location>
        <begin position="191"/>
        <end position="211"/>
    </location>
</feature>
<feature type="transmembrane region" description="Helical" evidence="2">
    <location>
        <begin position="228"/>
        <end position="248"/>
    </location>
</feature>
<feature type="transmembrane region" description="Helical" evidence="2">
    <location>
        <begin position="298"/>
        <end position="318"/>
    </location>
</feature>
<feature type="transmembrane region" description="Helical" evidence="2">
    <location>
        <begin position="333"/>
        <end position="353"/>
    </location>
</feature>
<feature type="transmembrane region" description="Helical" evidence="2">
    <location>
        <begin position="400"/>
        <end position="420"/>
    </location>
</feature>
<sequence length="423" mass="46857">MAKLSPLTLIFIAACLSRILHLTILSGLSKALPLFDTSPSLLLSSPPPALRWDAIHFASVAYNGYEYEQQVAFQPGWLAVMRLAGEGVRFIRAASVVELKDVILGGTIVANVAFVAATLVLYKLTKHIFNPTFAFLTSLLYLLPPTATPSAPYTEPIYSLLTFSGIYLLSIKRQMVLAGLCFAGATTIRSTGIFNSITLMCFAVFGDAHIFDLDPKDYCKIRKKLKPFLSAILVVAPFFMFQHYTETVFCTRELKRASTARPWCSNSPPVSYGFVQKLYWNVGPFEYWTVSQLPNFALAMPILFSSLAGVVKFFSHLVSSSQVLNHGTEEIPPPPILFELYSVHVLTMALLLFTSHTQITLRVCLGDPVVWWNAVKLGFDNVQIGEAPMGQVKVNKFGRYWIGWTVVWGAVAAVLWAGHYPPA</sequence>
<protein>
    <recommendedName>
        <fullName>GPI mannosyltransferase 2</fullName>
        <ecNumber>2.4.1.-</ecNumber>
    </recommendedName>
    <alternativeName>
        <fullName>GPI mannosyltransferase II</fullName>
        <shortName>GPI-MT-II</shortName>
    </alternativeName>
    <alternativeName>
        <fullName>Glycosylphosphatidylinositol-anchor biosynthesis protein 18</fullName>
    </alternativeName>
</protein>
<keyword id="KW-0256">Endoplasmic reticulum</keyword>
<keyword id="KW-0328">Glycosyltransferase</keyword>
<keyword id="KW-0337">GPI-anchor biosynthesis</keyword>
<keyword id="KW-0472">Membrane</keyword>
<keyword id="KW-0808">Transferase</keyword>
<keyword id="KW-0812">Transmembrane</keyword>
<keyword id="KW-1133">Transmembrane helix</keyword>
<organism>
    <name type="scientific">Cryptococcus neoformans var. neoformans serotype D (strain B-3501A)</name>
    <name type="common">Filobasidiella neoformans</name>
    <dbReference type="NCBI Taxonomy" id="283643"/>
    <lineage>
        <taxon>Eukaryota</taxon>
        <taxon>Fungi</taxon>
        <taxon>Dikarya</taxon>
        <taxon>Basidiomycota</taxon>
        <taxon>Agaricomycotina</taxon>
        <taxon>Tremellomycetes</taxon>
        <taxon>Tremellales</taxon>
        <taxon>Cryptococcaceae</taxon>
        <taxon>Cryptococcus</taxon>
        <taxon>Cryptococcus neoformans species complex</taxon>
    </lineage>
</organism>